<reference evidence="6" key="1">
    <citation type="journal article" date="2009" name="J. Plant Physiol.">
        <title>Analysis of the soluble cell wall proteome of gymnosperms.</title>
        <authorList>
            <person name="Uzal E.N."/>
            <person name="Gomez-Ros L.V."/>
            <person name="Hernandez J.A."/>
            <person name="Pedreno M.A."/>
            <person name="Cuello J."/>
            <person name="Ros Barcelo A."/>
        </authorList>
    </citation>
    <scope>PROTEIN SEQUENCE</scope>
    <scope>SUBCELLULAR LOCATION</scope>
    <source>
        <tissue evidence="4">Callus</tissue>
    </source>
</reference>
<protein>
    <recommendedName>
        <fullName>Peroxidase 2</fullName>
        <ecNumber>1.11.1.7</ecNumber>
    </recommendedName>
</protein>
<name>PER2_CYCRE</name>
<keyword id="KW-0106">Calcium</keyword>
<keyword id="KW-0134">Cell wall</keyword>
<keyword id="KW-0903">Direct protein sequencing</keyword>
<keyword id="KW-0349">Heme</keyword>
<keyword id="KW-0376">Hydrogen peroxide</keyword>
<keyword id="KW-0408">Iron</keyword>
<keyword id="KW-0479">Metal-binding</keyword>
<keyword id="KW-0560">Oxidoreductase</keyword>
<keyword id="KW-0575">Peroxidase</keyword>
<keyword id="KW-0964">Secreted</keyword>
<accession>P85347</accession>
<comment type="function">
    <text evidence="6">Removal of H(2)O(2), oxidation of toxic reductants, biosynthesis and degradation of lignin, suberization, auxin catabolism, response to environmental stresses such as wounding, pathogen attack and oxidative stress. These functions might be dependent on each isozyme/isoform in each plant tissue.</text>
</comment>
<comment type="catalytic activity">
    <reaction>
        <text>2 a phenolic donor + H2O2 = 2 a phenolic radical donor + 2 H2O</text>
        <dbReference type="Rhea" id="RHEA:56136"/>
        <dbReference type="ChEBI" id="CHEBI:15377"/>
        <dbReference type="ChEBI" id="CHEBI:16240"/>
        <dbReference type="ChEBI" id="CHEBI:139520"/>
        <dbReference type="ChEBI" id="CHEBI:139521"/>
        <dbReference type="EC" id="1.11.1.7"/>
    </reaction>
</comment>
<comment type="cofactor">
    <cofactor evidence="1 3">
        <name>Ca(2+)</name>
        <dbReference type="ChEBI" id="CHEBI:29108"/>
    </cofactor>
    <text evidence="1 3">Binds 2 calcium ions per subunit.</text>
</comment>
<comment type="cofactor">
    <cofactor evidence="1 3">
        <name>heme b</name>
        <dbReference type="ChEBI" id="CHEBI:60344"/>
    </cofactor>
    <text evidence="1 3">Binds 1 heme b (iron(II)-protoporphyrin IX) group per subunit.</text>
</comment>
<comment type="subcellular location">
    <subcellularLocation>
        <location evidence="2 3">Secreted</location>
    </subcellularLocation>
    <subcellularLocation>
        <location evidence="4">Secreted</location>
        <location evidence="4">Cell wall</location>
    </subcellularLocation>
</comment>
<comment type="similarity">
    <text evidence="3">Belongs to the peroxidase family. Classical plant (class III) peroxidase subfamily.</text>
</comment>
<sequence length="15" mass="1509">DLVALSGAHTIGQAR</sequence>
<dbReference type="EC" id="1.11.1.7"/>
<dbReference type="GO" id="GO:0005576">
    <property type="term" value="C:extracellular region"/>
    <property type="evidence" value="ECO:0007669"/>
    <property type="project" value="UniProtKB-SubCell"/>
</dbReference>
<dbReference type="GO" id="GO:0020037">
    <property type="term" value="F:heme binding"/>
    <property type="evidence" value="ECO:0007669"/>
    <property type="project" value="InterPro"/>
</dbReference>
<dbReference type="GO" id="GO:0140825">
    <property type="term" value="F:lactoperoxidase activity"/>
    <property type="evidence" value="ECO:0007669"/>
    <property type="project" value="UniProtKB-EC"/>
</dbReference>
<dbReference type="GO" id="GO:0046872">
    <property type="term" value="F:metal ion binding"/>
    <property type="evidence" value="ECO:0007669"/>
    <property type="project" value="UniProtKB-KW"/>
</dbReference>
<dbReference type="GO" id="GO:0042744">
    <property type="term" value="P:hydrogen peroxide catabolic process"/>
    <property type="evidence" value="ECO:0007669"/>
    <property type="project" value="UniProtKB-KW"/>
</dbReference>
<dbReference type="GO" id="GO:0006979">
    <property type="term" value="P:response to oxidative stress"/>
    <property type="evidence" value="ECO:0007669"/>
    <property type="project" value="InterPro"/>
</dbReference>
<dbReference type="InterPro" id="IPR010255">
    <property type="entry name" value="Haem_peroxidase_sf"/>
</dbReference>
<dbReference type="InterPro" id="IPR019793">
    <property type="entry name" value="Peroxidases_heam-ligand_BS"/>
</dbReference>
<dbReference type="SUPFAM" id="SSF48113">
    <property type="entry name" value="Heme-dependent peroxidases"/>
    <property type="match status" value="1"/>
</dbReference>
<dbReference type="PROSITE" id="PS00435">
    <property type="entry name" value="PEROXIDASE_1"/>
    <property type="match status" value="1"/>
</dbReference>
<feature type="chain" id="PRO_0000315884" description="Peroxidase 2">
    <location>
        <begin position="1" status="less than"/>
        <end position="15" status="greater than"/>
    </location>
</feature>
<feature type="binding site" description="axial binding residue" evidence="1 3">
    <location>
        <position position="9"/>
    </location>
    <ligand>
        <name>heme</name>
        <dbReference type="ChEBI" id="CHEBI:30413"/>
    </ligand>
    <ligandPart>
        <name>Fe</name>
        <dbReference type="ChEBI" id="CHEBI:18248"/>
    </ligandPart>
</feature>
<feature type="binding site" evidence="1 3">
    <location>
        <position position="10"/>
    </location>
    <ligand>
        <name>Ca(2+)</name>
        <dbReference type="ChEBI" id="CHEBI:29108"/>
        <label>2</label>
    </ligand>
</feature>
<feature type="non-terminal residue" evidence="5">
    <location>
        <position position="1"/>
    </location>
</feature>
<feature type="non-terminal residue" evidence="5">
    <location>
        <position position="15"/>
    </location>
</feature>
<proteinExistence type="evidence at protein level"/>
<organism>
    <name type="scientific">Cycas revoluta</name>
    <name type="common">Sago palm</name>
    <dbReference type="NCBI Taxonomy" id="3396"/>
    <lineage>
        <taxon>Eukaryota</taxon>
        <taxon>Viridiplantae</taxon>
        <taxon>Streptophyta</taxon>
        <taxon>Embryophyta</taxon>
        <taxon>Tracheophyta</taxon>
        <taxon>Spermatophyta</taxon>
        <taxon>Cycadidae</taxon>
        <taxon>Cycadales</taxon>
        <taxon>Cycadaceae</taxon>
        <taxon>Cycas</taxon>
    </lineage>
</organism>
<evidence type="ECO:0000250" key="1">
    <source>
        <dbReference type="UniProtKB" id="P22195"/>
    </source>
</evidence>
<evidence type="ECO:0000250" key="2">
    <source>
        <dbReference type="UniProtKB" id="P84516"/>
    </source>
</evidence>
<evidence type="ECO:0000255" key="3">
    <source>
        <dbReference type="PROSITE-ProRule" id="PRU00297"/>
    </source>
</evidence>
<evidence type="ECO:0000269" key="4">
    <source>
    </source>
</evidence>
<evidence type="ECO:0000303" key="5">
    <source>
    </source>
</evidence>
<evidence type="ECO:0000305" key="6"/>